<gene>
    <name type="primary">NMA111</name>
    <name type="synonym">YNM3</name>
    <name type="ORF">SCY_4672</name>
</gene>
<comment type="function">
    <text evidence="1">Nuclear serine protease which mediates apoptosis through proteolysis of the apoptotic inhibitor BIR1.</text>
</comment>
<comment type="subunit">
    <text evidence="1">Interacts with BIR1.</text>
</comment>
<comment type="subcellular location">
    <subcellularLocation>
        <location evidence="1">Nucleus</location>
    </subcellularLocation>
</comment>
<comment type="similarity">
    <text evidence="4">Belongs to the peptidase S1C family.</text>
</comment>
<dbReference type="EC" id="3.4.21.-"/>
<dbReference type="EMBL" id="EF125227">
    <property type="protein sequence ID" value="ABN58634.1"/>
    <property type="molecule type" value="Genomic_DNA"/>
</dbReference>
<dbReference type="EMBL" id="AAFW02000067">
    <property type="protein sequence ID" value="EDN62693.1"/>
    <property type="molecule type" value="Genomic_DNA"/>
</dbReference>
<dbReference type="SMR" id="A6ZRW1"/>
<dbReference type="HOGENOM" id="CLU_003212_0_0_1"/>
<dbReference type="Proteomes" id="UP000007060">
    <property type="component" value="Unassembled WGS sequence"/>
</dbReference>
<dbReference type="GO" id="GO:0005634">
    <property type="term" value="C:nucleus"/>
    <property type="evidence" value="ECO:0007669"/>
    <property type="project" value="UniProtKB-SubCell"/>
</dbReference>
<dbReference type="GO" id="GO:0004252">
    <property type="term" value="F:serine-type endopeptidase activity"/>
    <property type="evidence" value="ECO:0007669"/>
    <property type="project" value="InterPro"/>
</dbReference>
<dbReference type="GO" id="GO:0006915">
    <property type="term" value="P:apoptotic process"/>
    <property type="evidence" value="ECO:0007669"/>
    <property type="project" value="UniProtKB-KW"/>
</dbReference>
<dbReference type="GO" id="GO:0006508">
    <property type="term" value="P:proteolysis"/>
    <property type="evidence" value="ECO:0007669"/>
    <property type="project" value="UniProtKB-KW"/>
</dbReference>
<dbReference type="CDD" id="cd06786">
    <property type="entry name" value="cpPDZ1_ScNma111-like"/>
    <property type="match status" value="1"/>
</dbReference>
<dbReference type="CDD" id="cd10827">
    <property type="entry name" value="cpPDZ3_ScNma111-like"/>
    <property type="match status" value="1"/>
</dbReference>
<dbReference type="CDD" id="cd06719">
    <property type="entry name" value="PDZ2-4_Nma111p-like"/>
    <property type="match status" value="2"/>
</dbReference>
<dbReference type="FunFam" id="2.40.10.120:FF:000013">
    <property type="entry name" value="Pro-apoptotic serine protease NMA111"/>
    <property type="match status" value="1"/>
</dbReference>
<dbReference type="FunFam" id="2.40.10.120:FF:000014">
    <property type="entry name" value="Pro-apoptotic serine protease NMA111"/>
    <property type="match status" value="1"/>
</dbReference>
<dbReference type="Gene3D" id="2.30.42.10">
    <property type="match status" value="2"/>
</dbReference>
<dbReference type="Gene3D" id="2.40.10.120">
    <property type="match status" value="2"/>
</dbReference>
<dbReference type="InterPro" id="IPR001478">
    <property type="entry name" value="PDZ"/>
</dbReference>
<dbReference type="InterPro" id="IPR025926">
    <property type="entry name" value="PDZ-like_dom"/>
</dbReference>
<dbReference type="InterPro" id="IPR036034">
    <property type="entry name" value="PDZ_sf"/>
</dbReference>
<dbReference type="InterPro" id="IPR009003">
    <property type="entry name" value="Peptidase_S1_PA"/>
</dbReference>
<dbReference type="InterPro" id="IPR001940">
    <property type="entry name" value="Peptidase_S1C"/>
</dbReference>
<dbReference type="PANTHER" id="PTHR46366">
    <property type="entry name" value="PRO-APOPTOTIC SERINE PROTEASE NMA111"/>
    <property type="match status" value="1"/>
</dbReference>
<dbReference type="PANTHER" id="PTHR46366:SF8">
    <property type="entry name" value="PRO-APOPTOTIC SERINE PROTEASE NMA111"/>
    <property type="match status" value="1"/>
</dbReference>
<dbReference type="Pfam" id="PF00595">
    <property type="entry name" value="PDZ"/>
    <property type="match status" value="1"/>
</dbReference>
<dbReference type="Pfam" id="PF12812">
    <property type="entry name" value="PDZ_1"/>
    <property type="match status" value="2"/>
</dbReference>
<dbReference type="Pfam" id="PF13365">
    <property type="entry name" value="Trypsin_2"/>
    <property type="match status" value="1"/>
</dbReference>
<dbReference type="PRINTS" id="PR00834">
    <property type="entry name" value="PROTEASES2C"/>
</dbReference>
<dbReference type="SMART" id="SM00228">
    <property type="entry name" value="PDZ"/>
    <property type="match status" value="2"/>
</dbReference>
<dbReference type="SUPFAM" id="SSF50156">
    <property type="entry name" value="PDZ domain-like"/>
    <property type="match status" value="3"/>
</dbReference>
<dbReference type="SUPFAM" id="SSF50494">
    <property type="entry name" value="Trypsin-like serine proteases"/>
    <property type="match status" value="2"/>
</dbReference>
<evidence type="ECO:0000250" key="1"/>
<evidence type="ECO:0000255" key="2"/>
<evidence type="ECO:0000256" key="3">
    <source>
        <dbReference type="SAM" id="MobiDB-lite"/>
    </source>
</evidence>
<evidence type="ECO:0000305" key="4"/>
<protein>
    <recommendedName>
        <fullName>Pro-apoptotic serine protease NMA111</fullName>
        <ecNumber>3.4.21.-</ecNumber>
    </recommendedName>
    <alternativeName>
        <fullName>111 kDa nuclear mediator of apoptosis</fullName>
    </alternativeName>
</protein>
<name>NM111_YEAS7</name>
<accession>A6ZRW1</accession>
<accession>B0KZR3</accession>
<reference key="1">
    <citation type="journal article" date="2008" name="Genetics">
        <title>Sequential elimination of major-effect contributors identifies additional quantitative trait loci conditioning high-temperature growth in yeast.</title>
        <authorList>
            <person name="Sinha H."/>
            <person name="David L."/>
            <person name="Pascon R.C."/>
            <person name="Clauder-Muenster S."/>
            <person name="Krishnakumar S."/>
            <person name="Nguyen M."/>
            <person name="Shi G."/>
            <person name="Dean J."/>
            <person name="Davis R.W."/>
            <person name="Oefner P.J."/>
            <person name="McCusker J.H."/>
            <person name="Steinmetz L.M."/>
        </authorList>
    </citation>
    <scope>NUCLEOTIDE SEQUENCE [GENOMIC DNA]</scope>
</reference>
<reference key="2">
    <citation type="journal article" date="2007" name="Proc. Natl. Acad. Sci. U.S.A.">
        <title>Genome sequencing and comparative analysis of Saccharomyces cerevisiae strain YJM789.</title>
        <authorList>
            <person name="Wei W."/>
            <person name="McCusker J.H."/>
            <person name="Hyman R.W."/>
            <person name="Jones T."/>
            <person name="Ning Y."/>
            <person name="Cao Z."/>
            <person name="Gu Z."/>
            <person name="Bruno D."/>
            <person name="Miranda M."/>
            <person name="Nguyen M."/>
            <person name="Wilhelmy J."/>
            <person name="Komp C."/>
            <person name="Tamse R."/>
            <person name="Wang X."/>
            <person name="Jia P."/>
            <person name="Luedi P."/>
            <person name="Oefner P.J."/>
            <person name="David L."/>
            <person name="Dietrich F.S."/>
            <person name="Li Y."/>
            <person name="Davis R.W."/>
            <person name="Steinmetz L.M."/>
        </authorList>
    </citation>
    <scope>NUCLEOTIDE SEQUENCE [LARGE SCALE GENOMIC DNA]</scope>
    <source>
        <strain>YJM789</strain>
    </source>
</reference>
<feature type="chain" id="PRO_0000320363" description="Pro-apoptotic serine protease NMA111">
    <location>
        <begin position="1"/>
        <end position="997"/>
    </location>
</feature>
<feature type="domain" description="PDZ 1">
    <location>
        <begin position="300"/>
        <end position="378"/>
    </location>
</feature>
<feature type="domain" description="PDZ 2">
    <location>
        <begin position="779"/>
        <end position="854"/>
    </location>
</feature>
<feature type="region of interest" description="Disordered" evidence="3">
    <location>
        <begin position="1"/>
        <end position="43"/>
    </location>
</feature>
<feature type="region of interest" description="Serine protease">
    <location>
        <begin position="83"/>
        <end position="273"/>
    </location>
</feature>
<feature type="active site" description="Charge relay system" evidence="2">
    <location>
        <position position="121"/>
    </location>
</feature>
<feature type="active site" description="Charge relay system" evidence="2">
    <location>
        <position position="152"/>
    </location>
</feature>
<feature type="active site" description="Charge relay system" evidence="2">
    <location>
        <position position="235"/>
    </location>
</feature>
<organism>
    <name type="scientific">Saccharomyces cerevisiae (strain YJM789)</name>
    <name type="common">Baker's yeast</name>
    <dbReference type="NCBI Taxonomy" id="307796"/>
    <lineage>
        <taxon>Eukaryota</taxon>
        <taxon>Fungi</taxon>
        <taxon>Dikarya</taxon>
        <taxon>Ascomycota</taxon>
        <taxon>Saccharomycotina</taxon>
        <taxon>Saccharomycetes</taxon>
        <taxon>Saccharomycetales</taxon>
        <taxon>Saccharomycetaceae</taxon>
        <taxon>Saccharomyces</taxon>
    </lineage>
</organism>
<proteinExistence type="inferred from homology"/>
<sequence length="997" mass="110881">MTISLSNIKKRDHSKISDGTSGESSLVKRKQLESATGDQEEEYTDHEIIIEPLHFANNNNTVLTDSENYLRWQNTISNVVKSVVSIHFSQVAPFDCDSALVSEATGFVVDAKLGIILTNRHVVGPGPFVGYVVFDNHEECDVIPIYRDPVHDFGFLKFDPKNIKYSKIKALTLKPSLAKVGSEIRVVGNDAGEKLSILAGFISRIDRNAPEYGELTYNDFNTEYIQAAASASGGSSGSPVVNIDGYAVALQAGGSTEASTDFFLPLDRILRALICIQTNKPITRGTIQVQWLLKPYDECRRLGLTSERESEARAKFPENIGLLVAETVLREGPGYDKIKEGDTLISINGETISSFMQVDKIQDENVGKEIQLVIQRGGVECTVTCTVGDLHAITPHRYVEVCGATFHELSYQMARFYALPVRGVFLSSASGSFNFDSKERVGWIVDSIDNKETPDLDTFIEIMKTIPDRKRVTVRYHHLTDQHSPLVTSIYIDRHWCNEFRVYTRNDTTGIWDYKNVADPLPADALKPRSAKIIPIPVNNEKVAKLSSSLCTVATMAAVPLDSLSADILKTSGLIIDAEKGYVLVSRRVVPHDCLDTFVTIADSLVVPATVEFLHPTHNFAIVKYDPELVKAPLITPKLSTTRMKRGDKLQFIGFTQNDRIVTSETTVTDISSVSIPSNLIPRYRATNLEAISIDCNVSTRCNSGILTDNDGTVRGLWLPFLGERLENKEKVYLMGLDIMDCREVIDILKNGGKPRVSIVDAGFGSISVLQARIRGVPEEWIMRMEHESNNRLQFITVSRVSYTEDKIHLETGDVILSVNGKLVTEMNDLNGVVSSADGILPSAMLDFKVVRDGNIVDLKIKTVEVQETDRFVIFAGSILQKPHHAVLQAMVDVPKGVYCTFRGESSPALQYGISATNFITHVNEIETPDLDTFLKVVKTIPDNSYCKMRLMTFDNVPFAISLKTNYHYFPTAELKRDNITHKWIEKEFTGNSQSEK</sequence>
<keyword id="KW-0053">Apoptosis</keyword>
<keyword id="KW-0378">Hydrolase</keyword>
<keyword id="KW-0539">Nucleus</keyword>
<keyword id="KW-0645">Protease</keyword>
<keyword id="KW-0677">Repeat</keyword>
<keyword id="KW-0720">Serine protease</keyword>